<name>CARB_THENN</name>
<gene>
    <name evidence="1" type="primary">carB</name>
    <name type="ordered locus">CTN_0111</name>
</gene>
<accession>B9KB91</accession>
<proteinExistence type="inferred from homology"/>
<organism>
    <name type="scientific">Thermotoga neapolitana (strain ATCC 49049 / DSM 4359 / NBRC 107923 / NS-E)</name>
    <dbReference type="NCBI Taxonomy" id="309803"/>
    <lineage>
        <taxon>Bacteria</taxon>
        <taxon>Thermotogati</taxon>
        <taxon>Thermotogota</taxon>
        <taxon>Thermotogae</taxon>
        <taxon>Thermotogales</taxon>
        <taxon>Thermotogaceae</taxon>
        <taxon>Thermotoga</taxon>
    </lineage>
</organism>
<reference key="1">
    <citation type="submission" date="2007-11" db="EMBL/GenBank/DDBJ databases">
        <title>The genome sequence of the hyperthermophilic bacterium Thermotoga neapolitana.</title>
        <authorList>
            <person name="Lim S.K."/>
            <person name="Kim J.S."/>
            <person name="Cha S.H."/>
            <person name="Park B.C."/>
            <person name="Lee D.S."/>
            <person name="Tae H.S."/>
            <person name="Kim S.-J."/>
            <person name="Kim J.J."/>
            <person name="Park K.J."/>
            <person name="Lee S.Y."/>
        </authorList>
    </citation>
    <scope>NUCLEOTIDE SEQUENCE [LARGE SCALE GENOMIC DNA]</scope>
    <source>
        <strain>ATCC 49049 / DSM 4359 / NBRC 107923 / NS-E</strain>
    </source>
</reference>
<dbReference type="EC" id="6.3.4.16" evidence="1"/>
<dbReference type="EC" id="6.3.5.5" evidence="1"/>
<dbReference type="EMBL" id="CP000916">
    <property type="protein sequence ID" value="ACM22287.1"/>
    <property type="molecule type" value="Genomic_DNA"/>
</dbReference>
<dbReference type="RefSeq" id="WP_012644997.1">
    <property type="nucleotide sequence ID" value="NC_011978.1"/>
</dbReference>
<dbReference type="SMR" id="B9KB91"/>
<dbReference type="STRING" id="309803.CTN_0111"/>
<dbReference type="KEGG" id="tna:CTN_0111"/>
<dbReference type="eggNOG" id="COG0458">
    <property type="taxonomic scope" value="Bacteria"/>
</dbReference>
<dbReference type="HOGENOM" id="CLU_000513_1_0_0"/>
<dbReference type="UniPathway" id="UPA00068">
    <property type="reaction ID" value="UER00171"/>
</dbReference>
<dbReference type="UniPathway" id="UPA00070">
    <property type="reaction ID" value="UER00115"/>
</dbReference>
<dbReference type="Proteomes" id="UP000000445">
    <property type="component" value="Chromosome"/>
</dbReference>
<dbReference type="GO" id="GO:0005737">
    <property type="term" value="C:cytoplasm"/>
    <property type="evidence" value="ECO:0007669"/>
    <property type="project" value="TreeGrafter"/>
</dbReference>
<dbReference type="GO" id="GO:0005524">
    <property type="term" value="F:ATP binding"/>
    <property type="evidence" value="ECO:0007669"/>
    <property type="project" value="UniProtKB-UniRule"/>
</dbReference>
<dbReference type="GO" id="GO:0004087">
    <property type="term" value="F:carbamoyl-phosphate synthase (ammonia) activity"/>
    <property type="evidence" value="ECO:0007669"/>
    <property type="project" value="RHEA"/>
</dbReference>
<dbReference type="GO" id="GO:0004088">
    <property type="term" value="F:carbamoyl-phosphate synthase (glutamine-hydrolyzing) activity"/>
    <property type="evidence" value="ECO:0007669"/>
    <property type="project" value="UniProtKB-UniRule"/>
</dbReference>
<dbReference type="GO" id="GO:0046872">
    <property type="term" value="F:metal ion binding"/>
    <property type="evidence" value="ECO:0007669"/>
    <property type="project" value="UniProtKB-KW"/>
</dbReference>
<dbReference type="GO" id="GO:0044205">
    <property type="term" value="P:'de novo' UMP biosynthetic process"/>
    <property type="evidence" value="ECO:0007669"/>
    <property type="project" value="UniProtKB-UniRule"/>
</dbReference>
<dbReference type="GO" id="GO:0006541">
    <property type="term" value="P:glutamine metabolic process"/>
    <property type="evidence" value="ECO:0007669"/>
    <property type="project" value="TreeGrafter"/>
</dbReference>
<dbReference type="GO" id="GO:0006526">
    <property type="term" value="P:L-arginine biosynthetic process"/>
    <property type="evidence" value="ECO:0007669"/>
    <property type="project" value="UniProtKB-UniRule"/>
</dbReference>
<dbReference type="CDD" id="cd01424">
    <property type="entry name" value="MGS_CPS_II"/>
    <property type="match status" value="1"/>
</dbReference>
<dbReference type="FunFam" id="1.10.1030.10:FF:000002">
    <property type="entry name" value="Carbamoyl-phosphate synthase large chain"/>
    <property type="match status" value="1"/>
</dbReference>
<dbReference type="FunFam" id="3.30.1490.20:FF:000001">
    <property type="entry name" value="Carbamoyl-phosphate synthase large chain"/>
    <property type="match status" value="1"/>
</dbReference>
<dbReference type="FunFam" id="3.30.470.20:FF:000007">
    <property type="entry name" value="Carbamoyl-phosphate synthase large chain"/>
    <property type="match status" value="1"/>
</dbReference>
<dbReference type="FunFam" id="3.30.470.20:FF:000026">
    <property type="entry name" value="Carbamoyl-phosphate synthase large chain"/>
    <property type="match status" value="1"/>
</dbReference>
<dbReference type="FunFam" id="3.40.50.20:FF:000001">
    <property type="entry name" value="Carbamoyl-phosphate synthase large chain"/>
    <property type="match status" value="1"/>
</dbReference>
<dbReference type="FunFam" id="3.40.50.20:FF:000003">
    <property type="entry name" value="Carbamoyl-phosphate synthase large chain"/>
    <property type="match status" value="1"/>
</dbReference>
<dbReference type="Gene3D" id="3.40.50.20">
    <property type="match status" value="2"/>
</dbReference>
<dbReference type="Gene3D" id="3.30.1490.20">
    <property type="entry name" value="ATP-grasp fold, A domain"/>
    <property type="match status" value="1"/>
</dbReference>
<dbReference type="Gene3D" id="3.30.470.20">
    <property type="entry name" value="ATP-grasp fold, B domain"/>
    <property type="match status" value="2"/>
</dbReference>
<dbReference type="Gene3D" id="1.10.1030.10">
    <property type="entry name" value="Carbamoyl-phosphate synthetase, large subunit oligomerisation domain"/>
    <property type="match status" value="1"/>
</dbReference>
<dbReference type="Gene3D" id="3.40.50.1380">
    <property type="entry name" value="Methylglyoxal synthase-like domain"/>
    <property type="match status" value="1"/>
</dbReference>
<dbReference type="HAMAP" id="MF_01210_A">
    <property type="entry name" value="CPSase_L_chain_A"/>
    <property type="match status" value="1"/>
</dbReference>
<dbReference type="HAMAP" id="MF_01210_B">
    <property type="entry name" value="CPSase_L_chain_B"/>
    <property type="match status" value="1"/>
</dbReference>
<dbReference type="InterPro" id="IPR011761">
    <property type="entry name" value="ATP-grasp"/>
</dbReference>
<dbReference type="InterPro" id="IPR013815">
    <property type="entry name" value="ATP_grasp_subdomain_1"/>
</dbReference>
<dbReference type="InterPro" id="IPR006275">
    <property type="entry name" value="CarbamoylP_synth_lsu"/>
</dbReference>
<dbReference type="InterPro" id="IPR005480">
    <property type="entry name" value="CarbamoylP_synth_lsu_oligo"/>
</dbReference>
<dbReference type="InterPro" id="IPR036897">
    <property type="entry name" value="CarbamoylP_synth_lsu_oligo_sf"/>
</dbReference>
<dbReference type="InterPro" id="IPR005479">
    <property type="entry name" value="CbamoylP_synth_lsu-like_ATP-bd"/>
</dbReference>
<dbReference type="InterPro" id="IPR005483">
    <property type="entry name" value="CbamoylP_synth_lsu_CPSase_dom"/>
</dbReference>
<dbReference type="InterPro" id="IPR011607">
    <property type="entry name" value="MGS-like_dom"/>
</dbReference>
<dbReference type="InterPro" id="IPR036914">
    <property type="entry name" value="MGS-like_dom_sf"/>
</dbReference>
<dbReference type="InterPro" id="IPR033937">
    <property type="entry name" value="MGS_CPS_CarB"/>
</dbReference>
<dbReference type="InterPro" id="IPR016185">
    <property type="entry name" value="PreATP-grasp_dom_sf"/>
</dbReference>
<dbReference type="NCBIfam" id="TIGR01369">
    <property type="entry name" value="CPSaseII_lrg"/>
    <property type="match status" value="1"/>
</dbReference>
<dbReference type="NCBIfam" id="NF003671">
    <property type="entry name" value="PRK05294.1"/>
    <property type="match status" value="1"/>
</dbReference>
<dbReference type="NCBIfam" id="NF009455">
    <property type="entry name" value="PRK12815.1"/>
    <property type="match status" value="1"/>
</dbReference>
<dbReference type="PANTHER" id="PTHR11405:SF53">
    <property type="entry name" value="CARBAMOYL-PHOSPHATE SYNTHASE [AMMONIA], MITOCHONDRIAL"/>
    <property type="match status" value="1"/>
</dbReference>
<dbReference type="PANTHER" id="PTHR11405">
    <property type="entry name" value="CARBAMOYLTRANSFERASE FAMILY MEMBER"/>
    <property type="match status" value="1"/>
</dbReference>
<dbReference type="Pfam" id="PF02786">
    <property type="entry name" value="CPSase_L_D2"/>
    <property type="match status" value="2"/>
</dbReference>
<dbReference type="Pfam" id="PF02787">
    <property type="entry name" value="CPSase_L_D3"/>
    <property type="match status" value="1"/>
</dbReference>
<dbReference type="Pfam" id="PF02142">
    <property type="entry name" value="MGS"/>
    <property type="match status" value="1"/>
</dbReference>
<dbReference type="PRINTS" id="PR00098">
    <property type="entry name" value="CPSASE"/>
</dbReference>
<dbReference type="SMART" id="SM01096">
    <property type="entry name" value="CPSase_L_D3"/>
    <property type="match status" value="1"/>
</dbReference>
<dbReference type="SMART" id="SM00851">
    <property type="entry name" value="MGS"/>
    <property type="match status" value="1"/>
</dbReference>
<dbReference type="SUPFAM" id="SSF48108">
    <property type="entry name" value="Carbamoyl phosphate synthetase, large subunit connection domain"/>
    <property type="match status" value="1"/>
</dbReference>
<dbReference type="SUPFAM" id="SSF56059">
    <property type="entry name" value="Glutathione synthetase ATP-binding domain-like"/>
    <property type="match status" value="2"/>
</dbReference>
<dbReference type="SUPFAM" id="SSF52335">
    <property type="entry name" value="Methylglyoxal synthase-like"/>
    <property type="match status" value="1"/>
</dbReference>
<dbReference type="SUPFAM" id="SSF52440">
    <property type="entry name" value="PreATP-grasp domain"/>
    <property type="match status" value="2"/>
</dbReference>
<dbReference type="PROSITE" id="PS50975">
    <property type="entry name" value="ATP_GRASP"/>
    <property type="match status" value="2"/>
</dbReference>
<dbReference type="PROSITE" id="PS00866">
    <property type="entry name" value="CPSASE_1"/>
    <property type="match status" value="2"/>
</dbReference>
<dbReference type="PROSITE" id="PS00867">
    <property type="entry name" value="CPSASE_2"/>
    <property type="match status" value="2"/>
</dbReference>
<dbReference type="PROSITE" id="PS51855">
    <property type="entry name" value="MGS"/>
    <property type="match status" value="1"/>
</dbReference>
<comment type="function">
    <text evidence="1">Large subunit of the glutamine-dependent carbamoyl phosphate synthetase (CPSase). CPSase catalyzes the formation of carbamoyl phosphate from the ammonia moiety of glutamine, carbonate, and phosphate donated by ATP, constituting the first step of 2 biosynthetic pathways, one leading to arginine and/or urea and the other to pyrimidine nucleotides. The large subunit (synthetase) binds the substrates ammonia (free or transferred from glutamine from the small subunit), hydrogencarbonate and ATP and carries out an ATP-coupled ligase reaction, activating hydrogencarbonate by forming carboxy phosphate which reacts with ammonia to form carbamoyl phosphate.</text>
</comment>
<comment type="catalytic activity">
    <reaction evidence="1">
        <text>hydrogencarbonate + L-glutamine + 2 ATP + H2O = carbamoyl phosphate + L-glutamate + 2 ADP + phosphate + 2 H(+)</text>
        <dbReference type="Rhea" id="RHEA:18633"/>
        <dbReference type="ChEBI" id="CHEBI:15377"/>
        <dbReference type="ChEBI" id="CHEBI:15378"/>
        <dbReference type="ChEBI" id="CHEBI:17544"/>
        <dbReference type="ChEBI" id="CHEBI:29985"/>
        <dbReference type="ChEBI" id="CHEBI:30616"/>
        <dbReference type="ChEBI" id="CHEBI:43474"/>
        <dbReference type="ChEBI" id="CHEBI:58228"/>
        <dbReference type="ChEBI" id="CHEBI:58359"/>
        <dbReference type="ChEBI" id="CHEBI:456216"/>
        <dbReference type="EC" id="6.3.5.5"/>
    </reaction>
</comment>
<comment type="catalytic activity">
    <molecule>Carbamoyl phosphate synthase large chain</molecule>
    <reaction evidence="1">
        <text>hydrogencarbonate + NH4(+) + 2 ATP = carbamoyl phosphate + 2 ADP + phosphate + 2 H(+)</text>
        <dbReference type="Rhea" id="RHEA:18029"/>
        <dbReference type="ChEBI" id="CHEBI:15378"/>
        <dbReference type="ChEBI" id="CHEBI:17544"/>
        <dbReference type="ChEBI" id="CHEBI:28938"/>
        <dbReference type="ChEBI" id="CHEBI:30616"/>
        <dbReference type="ChEBI" id="CHEBI:43474"/>
        <dbReference type="ChEBI" id="CHEBI:58228"/>
        <dbReference type="ChEBI" id="CHEBI:456216"/>
        <dbReference type="EC" id="6.3.4.16"/>
    </reaction>
</comment>
<comment type="cofactor">
    <cofactor evidence="1">
        <name>Mg(2+)</name>
        <dbReference type="ChEBI" id="CHEBI:18420"/>
    </cofactor>
    <cofactor evidence="1">
        <name>Mn(2+)</name>
        <dbReference type="ChEBI" id="CHEBI:29035"/>
    </cofactor>
    <text evidence="1">Binds 4 Mg(2+) or Mn(2+) ions per subunit.</text>
</comment>
<comment type="pathway">
    <text evidence="1">Amino-acid biosynthesis; L-arginine biosynthesis; carbamoyl phosphate from bicarbonate: step 1/1.</text>
</comment>
<comment type="pathway">
    <text evidence="1">Pyrimidine metabolism; UMP biosynthesis via de novo pathway; (S)-dihydroorotate from bicarbonate: step 1/3.</text>
</comment>
<comment type="subunit">
    <text evidence="1">Composed of two chains; the small (or glutamine) chain promotes the hydrolysis of glutamine to ammonia, which is used by the large (or ammonia) chain to synthesize carbamoyl phosphate. Tetramer of heterodimers (alpha,beta)4.</text>
</comment>
<comment type="domain">
    <text evidence="1">The large subunit is composed of 2 ATP-grasp domains that are involved in binding the 2 ATP molecules needed for carbamoyl phosphate synthesis. The N-terminal ATP-grasp domain (referred to as the carboxyphosphate synthetic component) catalyzes the ATP-dependent phosphorylation of hydrogencarbonate to carboxyphosphate and the subsequent nucleophilic attack by ammonia to form a carbamate intermediate. The C-terminal ATP-grasp domain (referred to as the carbamoyl phosphate synthetic component) then catalyzes the phosphorylation of carbamate with the second ATP to form the end product carbamoyl phosphate. The reactive and unstable enzyme intermediates are sequentially channeled from one active site to the next through the interior of the protein over a distance of at least 96 A.</text>
</comment>
<comment type="similarity">
    <text evidence="1">Belongs to the CarB family.</text>
</comment>
<keyword id="KW-0028">Amino-acid biosynthesis</keyword>
<keyword id="KW-0055">Arginine biosynthesis</keyword>
<keyword id="KW-0067">ATP-binding</keyword>
<keyword id="KW-0436">Ligase</keyword>
<keyword id="KW-0460">Magnesium</keyword>
<keyword id="KW-0464">Manganese</keyword>
<keyword id="KW-0479">Metal-binding</keyword>
<keyword id="KW-0547">Nucleotide-binding</keyword>
<keyword id="KW-0665">Pyrimidine biosynthesis</keyword>
<keyword id="KW-0677">Repeat</keyword>
<feature type="chain" id="PRO_1000164722" description="Carbamoyl phosphate synthase large chain">
    <location>
        <begin position="1"/>
        <end position="1099"/>
    </location>
</feature>
<feature type="domain" description="ATP-grasp 1" evidence="1">
    <location>
        <begin position="133"/>
        <end position="328"/>
    </location>
</feature>
<feature type="domain" description="ATP-grasp 2" evidence="1">
    <location>
        <begin position="666"/>
        <end position="857"/>
    </location>
</feature>
<feature type="domain" description="MGS-like" evidence="1">
    <location>
        <begin position="945"/>
        <end position="1099"/>
    </location>
</feature>
<feature type="region of interest" description="Carboxyphosphate synthetic domain" evidence="1">
    <location>
        <begin position="1"/>
        <end position="402"/>
    </location>
</feature>
<feature type="region of interest" description="Oligomerization domain" evidence="1">
    <location>
        <begin position="403"/>
        <end position="541"/>
    </location>
</feature>
<feature type="region of interest" description="Carbamoyl phosphate synthetic domain" evidence="1">
    <location>
        <begin position="542"/>
        <end position="944"/>
    </location>
</feature>
<feature type="region of interest" description="Allosteric domain" evidence="1">
    <location>
        <begin position="945"/>
        <end position="1099"/>
    </location>
</feature>
<feature type="binding site" evidence="1">
    <location>
        <position position="129"/>
    </location>
    <ligand>
        <name>ATP</name>
        <dbReference type="ChEBI" id="CHEBI:30616"/>
        <label>1</label>
    </ligand>
</feature>
<feature type="binding site" evidence="1">
    <location>
        <position position="169"/>
    </location>
    <ligand>
        <name>ATP</name>
        <dbReference type="ChEBI" id="CHEBI:30616"/>
        <label>1</label>
    </ligand>
</feature>
<feature type="binding site" evidence="1">
    <location>
        <position position="175"/>
    </location>
    <ligand>
        <name>ATP</name>
        <dbReference type="ChEBI" id="CHEBI:30616"/>
        <label>1</label>
    </ligand>
</feature>
<feature type="binding site" evidence="1">
    <location>
        <position position="176"/>
    </location>
    <ligand>
        <name>ATP</name>
        <dbReference type="ChEBI" id="CHEBI:30616"/>
        <label>1</label>
    </ligand>
</feature>
<feature type="binding site" evidence="1">
    <location>
        <position position="208"/>
    </location>
    <ligand>
        <name>ATP</name>
        <dbReference type="ChEBI" id="CHEBI:30616"/>
        <label>1</label>
    </ligand>
</feature>
<feature type="binding site" evidence="1">
    <location>
        <position position="210"/>
    </location>
    <ligand>
        <name>ATP</name>
        <dbReference type="ChEBI" id="CHEBI:30616"/>
        <label>1</label>
    </ligand>
</feature>
<feature type="binding site" evidence="1">
    <location>
        <position position="215"/>
    </location>
    <ligand>
        <name>ATP</name>
        <dbReference type="ChEBI" id="CHEBI:30616"/>
        <label>1</label>
    </ligand>
</feature>
<feature type="binding site" evidence="1">
    <location>
        <position position="241"/>
    </location>
    <ligand>
        <name>ATP</name>
        <dbReference type="ChEBI" id="CHEBI:30616"/>
        <label>1</label>
    </ligand>
</feature>
<feature type="binding site" evidence="1">
    <location>
        <position position="242"/>
    </location>
    <ligand>
        <name>ATP</name>
        <dbReference type="ChEBI" id="CHEBI:30616"/>
        <label>1</label>
    </ligand>
</feature>
<feature type="binding site" evidence="1">
    <location>
        <position position="243"/>
    </location>
    <ligand>
        <name>ATP</name>
        <dbReference type="ChEBI" id="CHEBI:30616"/>
        <label>1</label>
    </ligand>
</feature>
<feature type="binding site" evidence="1">
    <location>
        <position position="285"/>
    </location>
    <ligand>
        <name>ATP</name>
        <dbReference type="ChEBI" id="CHEBI:30616"/>
        <label>1</label>
    </ligand>
</feature>
<feature type="binding site" evidence="1">
    <location>
        <position position="285"/>
    </location>
    <ligand>
        <name>Mg(2+)</name>
        <dbReference type="ChEBI" id="CHEBI:18420"/>
        <label>1</label>
    </ligand>
</feature>
<feature type="binding site" evidence="1">
    <location>
        <position position="285"/>
    </location>
    <ligand>
        <name>Mn(2+)</name>
        <dbReference type="ChEBI" id="CHEBI:29035"/>
        <label>1</label>
    </ligand>
</feature>
<feature type="binding site" evidence="1">
    <location>
        <position position="299"/>
    </location>
    <ligand>
        <name>ATP</name>
        <dbReference type="ChEBI" id="CHEBI:30616"/>
        <label>1</label>
    </ligand>
</feature>
<feature type="binding site" evidence="1">
    <location>
        <position position="299"/>
    </location>
    <ligand>
        <name>Mg(2+)</name>
        <dbReference type="ChEBI" id="CHEBI:18420"/>
        <label>1</label>
    </ligand>
</feature>
<feature type="binding site" evidence="1">
    <location>
        <position position="299"/>
    </location>
    <ligand>
        <name>Mg(2+)</name>
        <dbReference type="ChEBI" id="CHEBI:18420"/>
        <label>2</label>
    </ligand>
</feature>
<feature type="binding site" evidence="1">
    <location>
        <position position="299"/>
    </location>
    <ligand>
        <name>Mn(2+)</name>
        <dbReference type="ChEBI" id="CHEBI:29035"/>
        <label>1</label>
    </ligand>
</feature>
<feature type="binding site" evidence="1">
    <location>
        <position position="299"/>
    </location>
    <ligand>
        <name>Mn(2+)</name>
        <dbReference type="ChEBI" id="CHEBI:29035"/>
        <label>2</label>
    </ligand>
</feature>
<feature type="binding site" evidence="1">
    <location>
        <position position="301"/>
    </location>
    <ligand>
        <name>Mg(2+)</name>
        <dbReference type="ChEBI" id="CHEBI:18420"/>
        <label>2</label>
    </ligand>
</feature>
<feature type="binding site" evidence="1">
    <location>
        <position position="301"/>
    </location>
    <ligand>
        <name>Mn(2+)</name>
        <dbReference type="ChEBI" id="CHEBI:29035"/>
        <label>2</label>
    </ligand>
</feature>
<feature type="binding site" evidence="1">
    <location>
        <position position="702"/>
    </location>
    <ligand>
        <name>ATP</name>
        <dbReference type="ChEBI" id="CHEBI:30616"/>
        <label>2</label>
    </ligand>
</feature>
<feature type="binding site" evidence="1">
    <location>
        <position position="741"/>
    </location>
    <ligand>
        <name>ATP</name>
        <dbReference type="ChEBI" id="CHEBI:30616"/>
        <label>2</label>
    </ligand>
</feature>
<feature type="binding site" evidence="1">
    <location>
        <position position="743"/>
    </location>
    <ligand>
        <name>ATP</name>
        <dbReference type="ChEBI" id="CHEBI:30616"/>
        <label>2</label>
    </ligand>
</feature>
<feature type="binding site" evidence="1">
    <location>
        <position position="748"/>
    </location>
    <ligand>
        <name>ATP</name>
        <dbReference type="ChEBI" id="CHEBI:30616"/>
        <label>2</label>
    </ligand>
</feature>
<feature type="binding site" evidence="1">
    <location>
        <position position="773"/>
    </location>
    <ligand>
        <name>ATP</name>
        <dbReference type="ChEBI" id="CHEBI:30616"/>
        <label>2</label>
    </ligand>
</feature>
<feature type="binding site" evidence="1">
    <location>
        <position position="774"/>
    </location>
    <ligand>
        <name>ATP</name>
        <dbReference type="ChEBI" id="CHEBI:30616"/>
        <label>2</label>
    </ligand>
</feature>
<feature type="binding site" evidence="1">
    <location>
        <position position="775"/>
    </location>
    <ligand>
        <name>ATP</name>
        <dbReference type="ChEBI" id="CHEBI:30616"/>
        <label>2</label>
    </ligand>
</feature>
<feature type="binding site" evidence="1">
    <location>
        <position position="776"/>
    </location>
    <ligand>
        <name>ATP</name>
        <dbReference type="ChEBI" id="CHEBI:30616"/>
        <label>2</label>
    </ligand>
</feature>
<feature type="binding site" evidence="1">
    <location>
        <position position="816"/>
    </location>
    <ligand>
        <name>ATP</name>
        <dbReference type="ChEBI" id="CHEBI:30616"/>
        <label>2</label>
    </ligand>
</feature>
<feature type="binding site" evidence="1">
    <location>
        <position position="816"/>
    </location>
    <ligand>
        <name>Mg(2+)</name>
        <dbReference type="ChEBI" id="CHEBI:18420"/>
        <label>3</label>
    </ligand>
</feature>
<feature type="binding site" evidence="1">
    <location>
        <position position="816"/>
    </location>
    <ligand>
        <name>Mn(2+)</name>
        <dbReference type="ChEBI" id="CHEBI:29035"/>
        <label>3</label>
    </ligand>
</feature>
<feature type="binding site" evidence="1">
    <location>
        <position position="828"/>
    </location>
    <ligand>
        <name>ATP</name>
        <dbReference type="ChEBI" id="CHEBI:30616"/>
        <label>2</label>
    </ligand>
</feature>
<feature type="binding site" evidence="1">
    <location>
        <position position="828"/>
    </location>
    <ligand>
        <name>Mg(2+)</name>
        <dbReference type="ChEBI" id="CHEBI:18420"/>
        <label>3</label>
    </ligand>
</feature>
<feature type="binding site" evidence="1">
    <location>
        <position position="828"/>
    </location>
    <ligand>
        <name>Mg(2+)</name>
        <dbReference type="ChEBI" id="CHEBI:18420"/>
        <label>4</label>
    </ligand>
</feature>
<feature type="binding site" evidence="1">
    <location>
        <position position="828"/>
    </location>
    <ligand>
        <name>Mn(2+)</name>
        <dbReference type="ChEBI" id="CHEBI:29035"/>
        <label>3</label>
    </ligand>
</feature>
<feature type="binding site" evidence="1">
    <location>
        <position position="828"/>
    </location>
    <ligand>
        <name>Mn(2+)</name>
        <dbReference type="ChEBI" id="CHEBI:29035"/>
        <label>4</label>
    </ligand>
</feature>
<feature type="binding site" evidence="1">
    <location>
        <position position="830"/>
    </location>
    <ligand>
        <name>Mg(2+)</name>
        <dbReference type="ChEBI" id="CHEBI:18420"/>
        <label>4</label>
    </ligand>
</feature>
<feature type="binding site" evidence="1">
    <location>
        <position position="830"/>
    </location>
    <ligand>
        <name>Mn(2+)</name>
        <dbReference type="ChEBI" id="CHEBI:29035"/>
        <label>4</label>
    </ligand>
</feature>
<evidence type="ECO:0000255" key="1">
    <source>
        <dbReference type="HAMAP-Rule" id="MF_01210"/>
    </source>
</evidence>
<sequence length="1099" mass="121394">MPRREDIKRILVIGSGPITIGQAAEFDYSGTQALKALKSAGYEVIIVNSNSATIMTDPEFSDAVYIEPLTVEFLEEIIKKERPDALLPTLGGQTALNLAVELAESGILDRYGVQLIGAKLESIKKAEDRELFKKTMEEAGLEVLRSRLVNNLTDALETAREFGYPVIIRPSFTLGGTGGGVAFNEEELREIVTKGLIESPVHTVLIEESVIGWKEYELEVVRDGAGNFIVVCSIENLDPMGIHTGDSITVAPSQTLTDVEYQRMRDAAYKVIDAIGIETGGSNIQFAVDPKTGRMVVIEMNPRVSRSSALASKATGYPIAKIAALLAVGFTLDEIPNYITGKTLAAFEPSIDYVVVKIPRFQLEKFPGADPRLNTQMKSVGEVMAIGRTFKEALGKALRSLELDAAPKLDLDHIREHLANPTPERISYIFAAFRNGMDVEEVHELTKIDRWFLREMKACIDLEEELKEKKFDVEVLRKAKQWGYSDREIAEIWQVSEKDVRKMREKNRIFPVYKMVDTCAAEFEAQTPYYYSTYNGVENEAIPTDKEKIMILGSGPNRIGQGIEFDYTNVHGVWAFQEEGYEAIMVNSNPETVSTDYDTSDRLYFEPLTVEDVLEIVRNEKPKGVVVAFGGQTPLRIARHLVEEGVNIIGTSFESIEIAEDREKFAKLLKRIGLRCPPFGTASSVEEALKVAEDLGYPVLVRPSYVLGGRAMAIVDTPEELERYVREAAIVSPGYPILIDKFLEDAIELDVDVVSDGKYVWIAGLMEQIEEAGVHSGDSACVLPPVSLSEKLVEEIEKTVHRLVKALKIVGIANIQMAVKDEEIYIIEANPRASRTVPFVSKAIGIPVAKIAAKIMVGRSLPELLSEYFPYPTRPGTKVDKLGDSEILPTPWPRMFSVKEVVIPFHKFPGTDVLLGPEMRSTGEVMGIGEDFAEAFAKAEIAAGNPLPTEGAILATIADKDKRDAIPLLAHLADMGFEIYATKGTAKALQSHGVDVKVVPKVGEGRPDVIDLLEQGKISLVVITQSSDEPSLVAVSHGKDPFKVEGRRTVGYMIRTTALKRKIPYLTTVEALRAAVAAIRKMKRGSIVKVRKLTDTWKM</sequence>
<protein>
    <recommendedName>
        <fullName evidence="1">Carbamoyl phosphate synthase large chain</fullName>
        <ecNumber evidence="1">6.3.4.16</ecNumber>
        <ecNumber evidence="1">6.3.5.5</ecNumber>
    </recommendedName>
    <alternativeName>
        <fullName evidence="1">Carbamoyl phosphate synthetase ammonia chain</fullName>
    </alternativeName>
</protein>